<name>ALG2_CANGA</name>
<organism>
    <name type="scientific">Candida glabrata (strain ATCC 2001 / BCRC 20586 / JCM 3761 / NBRC 0622 / NRRL Y-65 / CBS 138)</name>
    <name type="common">Yeast</name>
    <name type="synonym">Nakaseomyces glabratus</name>
    <dbReference type="NCBI Taxonomy" id="284593"/>
    <lineage>
        <taxon>Eukaryota</taxon>
        <taxon>Fungi</taxon>
        <taxon>Dikarya</taxon>
        <taxon>Ascomycota</taxon>
        <taxon>Saccharomycotina</taxon>
        <taxon>Saccharomycetes</taxon>
        <taxon>Saccharomycetales</taxon>
        <taxon>Saccharomycetaceae</taxon>
        <taxon>Nakaseomyces</taxon>
    </lineage>
</organism>
<gene>
    <name type="primary">ALG2</name>
    <name type="ordered locus">CAGL0M05731g</name>
</gene>
<keyword id="KW-0256">Endoplasmic reticulum</keyword>
<keyword id="KW-0325">Glycoprotein</keyword>
<keyword id="KW-0328">Glycosyltransferase</keyword>
<keyword id="KW-0472">Membrane</keyword>
<keyword id="KW-1185">Reference proteome</keyword>
<keyword id="KW-0808">Transferase</keyword>
<keyword id="KW-0812">Transmembrane</keyword>
<keyword id="KW-1133">Transmembrane helix</keyword>
<evidence type="ECO:0000250" key="1">
    <source>
        <dbReference type="UniProtKB" id="P43636"/>
    </source>
</evidence>
<evidence type="ECO:0000255" key="2"/>
<evidence type="ECO:0000305" key="3"/>
<dbReference type="EC" id="2.4.1.132" evidence="1"/>
<dbReference type="EC" id="2.4.1.257" evidence="1"/>
<dbReference type="EMBL" id="CR380959">
    <property type="protein sequence ID" value="CAG62571.1"/>
    <property type="molecule type" value="Genomic_DNA"/>
</dbReference>
<dbReference type="RefSeq" id="XP_449595.1">
    <property type="nucleotide sequence ID" value="XM_449595.1"/>
</dbReference>
<dbReference type="FunCoup" id="Q6FJJ9">
    <property type="interactions" value="761"/>
</dbReference>
<dbReference type="STRING" id="284593.Q6FJJ9"/>
<dbReference type="CAZy" id="GT4">
    <property type="family name" value="Glycosyltransferase Family 4"/>
</dbReference>
<dbReference type="GlyCosmos" id="Q6FJJ9">
    <property type="glycosylation" value="2 sites, No reported glycans"/>
</dbReference>
<dbReference type="EnsemblFungi" id="CAGL0M05731g-T">
    <property type="protein sequence ID" value="CAGL0M05731g-T-p1"/>
    <property type="gene ID" value="CAGL0M05731g"/>
</dbReference>
<dbReference type="KEGG" id="cgr:2891643"/>
<dbReference type="CGD" id="CAL0137195">
    <property type="gene designation" value="CAGL0M05731g"/>
</dbReference>
<dbReference type="VEuPathDB" id="FungiDB:CAGL0M05731g"/>
<dbReference type="eggNOG" id="KOG0853">
    <property type="taxonomic scope" value="Eukaryota"/>
</dbReference>
<dbReference type="HOGENOM" id="CLU_030619_1_0_1"/>
<dbReference type="InParanoid" id="Q6FJJ9"/>
<dbReference type="OMA" id="AMYMKCP"/>
<dbReference type="UniPathway" id="UPA00378"/>
<dbReference type="Proteomes" id="UP000002428">
    <property type="component" value="Chromosome M"/>
</dbReference>
<dbReference type="GO" id="GO:0005789">
    <property type="term" value="C:endoplasmic reticulum membrane"/>
    <property type="evidence" value="ECO:0007669"/>
    <property type="project" value="UniProtKB-SubCell"/>
</dbReference>
<dbReference type="GO" id="GO:0062040">
    <property type="term" value="C:fungal biofilm matrix"/>
    <property type="evidence" value="ECO:0000314"/>
    <property type="project" value="CGD"/>
</dbReference>
<dbReference type="GO" id="GO:0004378">
    <property type="term" value="F:GDP-Man:Man1GlcNAc2-PP-Dol alpha-1,3-mannosyltransferase activity"/>
    <property type="evidence" value="ECO:0007669"/>
    <property type="project" value="UniProtKB-EC"/>
</dbReference>
<dbReference type="GO" id="GO:0102704">
    <property type="term" value="F:GDP-Man:Man2GlcNAc2-PP-dolichol alpha-1,6-mannosyltransferase activity"/>
    <property type="evidence" value="ECO:0007669"/>
    <property type="project" value="UniProtKB-EC"/>
</dbReference>
<dbReference type="GO" id="GO:0006488">
    <property type="term" value="P:dolichol-linked oligosaccharide biosynthetic process"/>
    <property type="evidence" value="ECO:0007669"/>
    <property type="project" value="EnsemblFungi"/>
</dbReference>
<dbReference type="CDD" id="cd03805">
    <property type="entry name" value="GT4_ALG2-like"/>
    <property type="match status" value="1"/>
</dbReference>
<dbReference type="Gene3D" id="3.40.50.2000">
    <property type="entry name" value="Glycogen Phosphorylase B"/>
    <property type="match status" value="2"/>
</dbReference>
<dbReference type="InterPro" id="IPR027054">
    <property type="entry name" value="ALG2"/>
</dbReference>
<dbReference type="InterPro" id="IPR001296">
    <property type="entry name" value="Glyco_trans_1"/>
</dbReference>
<dbReference type="InterPro" id="IPR028098">
    <property type="entry name" value="Glyco_trans_4-like_N"/>
</dbReference>
<dbReference type="PANTHER" id="PTHR45918">
    <property type="entry name" value="ALPHA-1,3/1,6-MANNOSYLTRANSFERASE ALG2"/>
    <property type="match status" value="1"/>
</dbReference>
<dbReference type="PANTHER" id="PTHR45918:SF1">
    <property type="entry name" value="ALPHA-1,3_1,6-MANNOSYLTRANSFERASE ALG2"/>
    <property type="match status" value="1"/>
</dbReference>
<dbReference type="Pfam" id="PF13439">
    <property type="entry name" value="Glyco_transf_4"/>
    <property type="match status" value="1"/>
</dbReference>
<dbReference type="Pfam" id="PF00534">
    <property type="entry name" value="Glycos_transf_1"/>
    <property type="match status" value="1"/>
</dbReference>
<dbReference type="SUPFAM" id="SSF53756">
    <property type="entry name" value="UDP-Glycosyltransferase/glycogen phosphorylase"/>
    <property type="match status" value="1"/>
</dbReference>
<sequence>MVPAKKLKIAFVHPDLGIGGAERLVVDAALGLQEAGHEVIIYTSHCDKTHCFEEVKNGTLKVEVFGDFLPTDLGKRFFIVFANLRQLYLTAKVVLSGRSKDKDVFIIDQLSTCVPFFKLANNKVLFYCHFPDQLLAIRTNWIKSLYRIPFDLLEQFTMYCSDEVVVNSNFTKSMYKKTFKYLQKNPNVIYPCVDTDTETLINDRDMQIGNLLVGKCPNFYLSINRYERKKNIELAIQAFAKASVENTNLVVCGGYDPRIHENVQYLQELTCLCKELDLSYTVNHYSDFIEDSYSVNEIEKLFGAKVIFLTSISSSLKEFLIQNMQLLLYTPSYEHFGIVPLEAMKYGKPVLAVNNGGPVETVVSYQKEDNEKSTTGWLRSADADEWASALIESKEVLNQNPELFKNNGPKRVIELFSRKAMTQEFETNIKLALRHTSNISIIYVVSIIFAVLLKVFVF</sequence>
<comment type="function">
    <text evidence="1">Mannosylates Man(2)GlcNAc(2)-dolichol diphosphate and Man(1)GlcNAc(2)-dolichol diphosphate to form Man(3)GlcNAc(2)-dolichol diphosphate.</text>
</comment>
<comment type="catalytic activity">
    <reaction evidence="1">
        <text>a beta-D-Man-(1-&gt;4)-beta-D-GlcNAc-(1-&gt;4)-alpha-D-GlcNAc-diphospho-di-trans,poly-cis-dolichol + GDP-alpha-D-mannose = an alpha-D-Man-(1-&gt;3)-beta-D-Man-(1-&gt;4)-beta-D-GlcNAc-(1-&gt;4)-alpha-D-GlcNAc-diphospho-di-trans,poly-cis-dolichol + GDP + H(+)</text>
        <dbReference type="Rhea" id="RHEA:29515"/>
        <dbReference type="Rhea" id="RHEA-COMP:19511"/>
        <dbReference type="Rhea" id="RHEA-COMP:19513"/>
        <dbReference type="ChEBI" id="CHEBI:15378"/>
        <dbReference type="ChEBI" id="CHEBI:57527"/>
        <dbReference type="ChEBI" id="CHEBI:58189"/>
        <dbReference type="ChEBI" id="CHEBI:58472"/>
        <dbReference type="ChEBI" id="CHEBI:132510"/>
        <dbReference type="EC" id="2.4.1.132"/>
    </reaction>
    <physiologicalReaction direction="left-to-right" evidence="1">
        <dbReference type="Rhea" id="RHEA:29516"/>
    </physiologicalReaction>
</comment>
<comment type="catalytic activity">
    <reaction evidence="1">
        <text>an alpha-D-Man-(1-&gt;3)-beta-D-Man-(1-&gt;4)-beta-D-GlcNAc-(1-&gt;4)-alpha-D-GlcNAc-diphospho-di-trans,poly-cis-dolichol + GDP-alpha-D-mannose = an alpha-D-Man-(1-&gt;3)-[alpha-D-Man-(1-&gt;6)]-beta-D-Man-(1-&gt;4)-beta-D-GlcNAc-(1-&gt;4)-alpha-D-GlcNAc-diphospho-di-trans,poly-cis-dolichol + GDP + H(+)</text>
        <dbReference type="Rhea" id="RHEA:29519"/>
        <dbReference type="Rhea" id="RHEA-COMP:19513"/>
        <dbReference type="Rhea" id="RHEA-COMP:19515"/>
        <dbReference type="ChEBI" id="CHEBI:15378"/>
        <dbReference type="ChEBI" id="CHEBI:57527"/>
        <dbReference type="ChEBI" id="CHEBI:58189"/>
        <dbReference type="ChEBI" id="CHEBI:132510"/>
        <dbReference type="ChEBI" id="CHEBI:132511"/>
        <dbReference type="EC" id="2.4.1.257"/>
    </reaction>
    <physiologicalReaction direction="left-to-right" evidence="1">
        <dbReference type="Rhea" id="RHEA:29520"/>
    </physiologicalReaction>
</comment>
<comment type="pathway">
    <text evidence="1">Protein modification; protein glycosylation.</text>
</comment>
<comment type="subcellular location">
    <subcellularLocation>
        <location evidence="1">Endoplasmic reticulum membrane</location>
        <topology evidence="2">Single-pass membrane protein</topology>
    </subcellularLocation>
</comment>
<comment type="similarity">
    <text evidence="3">Belongs to the glycosyltransferase group 1 family.</text>
</comment>
<feature type="chain" id="PRO_0000080264" description="Alpha-1,3/1,6-mannosyltransferase ALG2">
    <location>
        <begin position="1"/>
        <end position="458"/>
    </location>
</feature>
<feature type="transmembrane region" description="Helical" evidence="2">
    <location>
        <begin position="438"/>
        <end position="458"/>
    </location>
</feature>
<feature type="glycosylation site" description="N-linked (GlcNAc...) asparagine" evidence="2">
    <location>
        <position position="57"/>
    </location>
</feature>
<feature type="glycosylation site" description="N-linked (GlcNAc...) asparagine" evidence="2">
    <location>
        <position position="169"/>
    </location>
</feature>
<accession>Q6FJJ9</accession>
<proteinExistence type="inferred from homology"/>
<protein>
    <recommendedName>
        <fullName>Alpha-1,3/1,6-mannosyltransferase ALG2</fullName>
        <ecNumber evidence="1">2.4.1.132</ecNumber>
        <ecNumber evidence="1">2.4.1.257</ecNumber>
    </recommendedName>
    <alternativeName>
        <fullName>Asparagine-linked glycosylation protein 2</fullName>
    </alternativeName>
    <alternativeName>
        <fullName>GDP-Man:Man(1)GlcNAc(2)-PP-Dol alpha-1,3-mannosyltransferase</fullName>
    </alternativeName>
    <alternativeName>
        <fullName>GDP-Man:Man(1)GlcNAc(2)-PP-dolichol mannosyltransferase</fullName>
    </alternativeName>
    <alternativeName>
        <fullName>GDP-Man:Man(2)GlcNAc(2)-PP-Dol alpha-1,6-mannosyltransferase</fullName>
    </alternativeName>
</protein>
<reference key="1">
    <citation type="journal article" date="2004" name="Nature">
        <title>Genome evolution in yeasts.</title>
        <authorList>
            <person name="Dujon B."/>
            <person name="Sherman D."/>
            <person name="Fischer G."/>
            <person name="Durrens P."/>
            <person name="Casaregola S."/>
            <person name="Lafontaine I."/>
            <person name="de Montigny J."/>
            <person name="Marck C."/>
            <person name="Neuveglise C."/>
            <person name="Talla E."/>
            <person name="Goffard N."/>
            <person name="Frangeul L."/>
            <person name="Aigle M."/>
            <person name="Anthouard V."/>
            <person name="Babour A."/>
            <person name="Barbe V."/>
            <person name="Barnay S."/>
            <person name="Blanchin S."/>
            <person name="Beckerich J.-M."/>
            <person name="Beyne E."/>
            <person name="Bleykasten C."/>
            <person name="Boisrame A."/>
            <person name="Boyer J."/>
            <person name="Cattolico L."/>
            <person name="Confanioleri F."/>
            <person name="de Daruvar A."/>
            <person name="Despons L."/>
            <person name="Fabre E."/>
            <person name="Fairhead C."/>
            <person name="Ferry-Dumazet H."/>
            <person name="Groppi A."/>
            <person name="Hantraye F."/>
            <person name="Hennequin C."/>
            <person name="Jauniaux N."/>
            <person name="Joyet P."/>
            <person name="Kachouri R."/>
            <person name="Kerrest A."/>
            <person name="Koszul R."/>
            <person name="Lemaire M."/>
            <person name="Lesur I."/>
            <person name="Ma L."/>
            <person name="Muller H."/>
            <person name="Nicaud J.-M."/>
            <person name="Nikolski M."/>
            <person name="Oztas S."/>
            <person name="Ozier-Kalogeropoulos O."/>
            <person name="Pellenz S."/>
            <person name="Potier S."/>
            <person name="Richard G.-F."/>
            <person name="Straub M.-L."/>
            <person name="Suleau A."/>
            <person name="Swennen D."/>
            <person name="Tekaia F."/>
            <person name="Wesolowski-Louvel M."/>
            <person name="Westhof E."/>
            <person name="Wirth B."/>
            <person name="Zeniou-Meyer M."/>
            <person name="Zivanovic Y."/>
            <person name="Bolotin-Fukuhara M."/>
            <person name="Thierry A."/>
            <person name="Bouchier C."/>
            <person name="Caudron B."/>
            <person name="Scarpelli C."/>
            <person name="Gaillardin C."/>
            <person name="Weissenbach J."/>
            <person name="Wincker P."/>
            <person name="Souciet J.-L."/>
        </authorList>
    </citation>
    <scope>NUCLEOTIDE SEQUENCE [LARGE SCALE GENOMIC DNA]</scope>
    <source>
        <strain>ATCC 2001 / BCRC 20586 / JCM 3761 / NBRC 0622 / NRRL Y-65 / CBS 138</strain>
    </source>
</reference>